<accession>P13218</accession>
<reference key="1">
    <citation type="journal article" date="1989" name="Nucleic Acids Res.">
        <title>DNA sequence of gene VI of cauliflower mosaic virus Japanese strain S (CaMV S-Japan).</title>
        <authorList>
            <person name="Takahashi H."/>
            <person name="Shimamoto K."/>
            <person name="Suzuki M."/>
            <person name="Ehara Y."/>
        </authorList>
    </citation>
    <scope>NUCLEOTIDE SEQUENCE [GENOMIC DNA]</scope>
</reference>
<name>IBMP_CAMVJ</name>
<protein>
    <recommendedName>
        <fullName>Transactivator/viroplasmin protein</fullName>
        <shortName>Tav</shortName>
    </recommendedName>
    <alternativeName>
        <fullName>Inclusion body matrix protein</fullName>
    </alternativeName>
</protein>
<organismHost>
    <name type="scientific">Arabidopsis thaliana</name>
    <name type="common">Mouse-ear cress</name>
    <dbReference type="NCBI Taxonomy" id="3702"/>
</organismHost>
<organismHost>
    <name type="scientific">Brassica</name>
    <dbReference type="NCBI Taxonomy" id="3705"/>
</organismHost>
<organismHost>
    <name type="scientific">Raphanus</name>
    <dbReference type="NCBI Taxonomy" id="3725"/>
</organismHost>
<keyword id="KW-1035">Host cytoplasm</keyword>
<keyword id="KW-0810">Translation regulation</keyword>
<sequence>MENIEKLLMQEKILMLELDLVRAKISLARANGSSQQGDLSLHRETPVKEEAVHSALATFTPTQVKAIPEQTAPGKESTNPLMASILPKDMNSVQTENRLVKPLDFLRPHQGIPIPQKSEPNSSVTLHRVESGIQHPHTNYYVVYNGPHAGIYDDWGCTKAATNGVPGVAHKKFATITEARAAADAYTTNQQTGRLNFIPKGEAQLKPKSFAKALISPPKQKAHWLTLGTKKPSSDPAPKEISFDPEITMDDFLYLYDLARKFDGEDDGTIFTTDNEKISLFNFRKNANPQMVREAYTAGLIKTIYPSNNLQEIKYLPKKVKDAVKRFRTNCIKNTEKDIFLKIRSTIPVWTIQGLLHKPRQVIEIGVSKKIVPTESKAMESKIQIEDLTELAVKSGEQFIQSLLRLNDKKKIFVNMVEHDTLVYSKNIKDTVSEDQRAIETFQQRVISGNLLGFHCPAICHFIMKTVEKEGGAYKCHHCEKGKAIVKDASTDRGTTDKDGPPPTRSIVEKEDVPTTSSKQVD</sequence>
<comment type="function">
    <text evidence="1">Enhances the ribosomal termination-reinitiation event leading to the translation of major open reading frames on the polycistronic viral RNAs.</text>
</comment>
<comment type="subcellular location">
    <subcellularLocation>
        <location>Host cytoplasm</location>
    </subcellularLocation>
    <text>Found in cytoplasmic occlusion bodies.</text>
</comment>
<comment type="miscellaneous">
    <text>The inclusion bodies are the site of viral DNA synthesis, virion assembly and accumulation in the infected cell.</text>
</comment>
<comment type="similarity">
    <text evidence="3">Belongs to the caulimoviridae viroplasmin family.</text>
</comment>
<feature type="chain" id="PRO_0000222042" description="Transactivator/viroplasmin protein">
    <location>
        <begin position="1"/>
        <end position="522"/>
    </location>
</feature>
<feature type="region of interest" description="Disordered" evidence="2">
    <location>
        <begin position="487"/>
        <end position="522"/>
    </location>
</feature>
<feature type="compositionally biased region" description="Basic and acidic residues" evidence="2">
    <location>
        <begin position="487"/>
        <end position="500"/>
    </location>
</feature>
<evidence type="ECO:0000250" key="1">
    <source>
        <dbReference type="UniProtKB" id="P03558"/>
    </source>
</evidence>
<evidence type="ECO:0000256" key="2">
    <source>
        <dbReference type="SAM" id="MobiDB-lite"/>
    </source>
</evidence>
<evidence type="ECO:0000305" key="3"/>
<proteinExistence type="inferred from homology"/>
<organism>
    <name type="scientific">Cauliflower mosaic virus (strain S-Japan)</name>
    <name type="common">CaMV</name>
    <dbReference type="NCBI Taxonomy" id="10646"/>
    <lineage>
        <taxon>Viruses</taxon>
        <taxon>Riboviria</taxon>
        <taxon>Pararnavirae</taxon>
        <taxon>Artverviricota</taxon>
        <taxon>Revtraviricetes</taxon>
        <taxon>Ortervirales</taxon>
        <taxon>Caulimoviridae</taxon>
        <taxon>Caulimovirus</taxon>
        <taxon>Caulimovirus tessellobrassicae</taxon>
    </lineage>
</organism>
<gene>
    <name type="ORF">ORF VI</name>
</gene>
<dbReference type="EMBL" id="X14911">
    <property type="protein sequence ID" value="CAA33037.1"/>
    <property type="molecule type" value="Genomic_DNA"/>
</dbReference>
<dbReference type="PIR" id="S06092">
    <property type="entry name" value="S06092"/>
</dbReference>
<dbReference type="SMR" id="P13218"/>
<dbReference type="GO" id="GO:0030430">
    <property type="term" value="C:host cell cytoplasm"/>
    <property type="evidence" value="ECO:0007669"/>
    <property type="project" value="UniProtKB-SubCell"/>
</dbReference>
<dbReference type="GO" id="GO:0006417">
    <property type="term" value="P:regulation of translation"/>
    <property type="evidence" value="ECO:0007669"/>
    <property type="project" value="UniProtKB-KW"/>
</dbReference>
<dbReference type="FunFam" id="3.40.970.10:FF:000003">
    <property type="entry name" value="Transactivator/viroplasmin protein"/>
    <property type="match status" value="1"/>
</dbReference>
<dbReference type="Gene3D" id="3.40.970.10">
    <property type="entry name" value="Ribonuclease H1, N-terminal domain"/>
    <property type="match status" value="1"/>
</dbReference>
<dbReference type="InterPro" id="IPR009027">
    <property type="entry name" value="Ribosomal_bL9/RNase_H1_N"/>
</dbReference>
<dbReference type="InterPro" id="IPR011320">
    <property type="entry name" value="RNase_H1_N"/>
</dbReference>
<dbReference type="InterPro" id="IPR037056">
    <property type="entry name" value="RNase_H1_N_sf"/>
</dbReference>
<dbReference type="Pfam" id="PF01693">
    <property type="entry name" value="Cauli_VI"/>
    <property type="match status" value="1"/>
</dbReference>
<dbReference type="SUPFAM" id="SSF55658">
    <property type="entry name" value="L9 N-domain-like"/>
    <property type="match status" value="1"/>
</dbReference>